<gene>
    <name type="primary">ARL4D</name>
</gene>
<organism>
    <name type="scientific">Bos taurus</name>
    <name type="common">Bovine</name>
    <dbReference type="NCBI Taxonomy" id="9913"/>
    <lineage>
        <taxon>Eukaryota</taxon>
        <taxon>Metazoa</taxon>
        <taxon>Chordata</taxon>
        <taxon>Craniata</taxon>
        <taxon>Vertebrata</taxon>
        <taxon>Euteleostomi</taxon>
        <taxon>Mammalia</taxon>
        <taxon>Eutheria</taxon>
        <taxon>Laurasiatheria</taxon>
        <taxon>Artiodactyla</taxon>
        <taxon>Ruminantia</taxon>
        <taxon>Pecora</taxon>
        <taxon>Bovidae</taxon>
        <taxon>Bovinae</taxon>
        <taxon>Bos</taxon>
    </lineage>
</organism>
<dbReference type="EMBL" id="BC120393">
    <property type="protein sequence ID" value="AAI20394.1"/>
    <property type="molecule type" value="mRNA"/>
</dbReference>
<dbReference type="RefSeq" id="NP_001069603.1">
    <property type="nucleotide sequence ID" value="NM_001076135.1"/>
</dbReference>
<dbReference type="SMR" id="Q0VC18"/>
<dbReference type="FunCoup" id="Q0VC18">
    <property type="interactions" value="54"/>
</dbReference>
<dbReference type="STRING" id="9913.ENSBTAP00000022409"/>
<dbReference type="PaxDb" id="9913-ENSBTAP00000022409"/>
<dbReference type="Ensembl" id="ENSBTAT00000022409.5">
    <property type="protein sequence ID" value="ENSBTAP00000022409.3"/>
    <property type="gene ID" value="ENSBTAG00000058116.1"/>
</dbReference>
<dbReference type="Ensembl" id="ENSBTAT00000108700.1">
    <property type="protein sequence ID" value="ENSBTAP00000082742.1"/>
    <property type="gene ID" value="ENSBTAG00000058116.1"/>
</dbReference>
<dbReference type="Ensembl" id="ENSBTAT00000127442.1">
    <property type="protein sequence ID" value="ENSBTAP00000088070.1"/>
    <property type="gene ID" value="ENSBTAG00000058116.1"/>
</dbReference>
<dbReference type="GeneID" id="538936"/>
<dbReference type="KEGG" id="bta:538936"/>
<dbReference type="CTD" id="379"/>
<dbReference type="VEuPathDB" id="HostDB:ENSBTAG00000016847"/>
<dbReference type="eggNOG" id="KOG0070">
    <property type="taxonomic scope" value="Eukaryota"/>
</dbReference>
<dbReference type="GeneTree" id="ENSGT00940000161341"/>
<dbReference type="HOGENOM" id="CLU_040729_9_2_1"/>
<dbReference type="InParanoid" id="Q0VC18"/>
<dbReference type="OMA" id="YTLHHVQ"/>
<dbReference type="OrthoDB" id="2011769at2759"/>
<dbReference type="TreeFam" id="TF105464"/>
<dbReference type="Proteomes" id="UP000009136">
    <property type="component" value="Chromosome 19"/>
</dbReference>
<dbReference type="Bgee" id="ENSBTAG00000016847">
    <property type="expression patterns" value="Expressed in liver and 100 other cell types or tissues"/>
</dbReference>
<dbReference type="GO" id="GO:0005737">
    <property type="term" value="C:cytoplasm"/>
    <property type="evidence" value="ECO:0000250"/>
    <property type="project" value="UniProtKB"/>
</dbReference>
<dbReference type="GO" id="GO:0005730">
    <property type="term" value="C:nucleolus"/>
    <property type="evidence" value="ECO:0007669"/>
    <property type="project" value="UniProtKB-SubCell"/>
</dbReference>
<dbReference type="GO" id="GO:0005886">
    <property type="term" value="C:plasma membrane"/>
    <property type="evidence" value="ECO:0000250"/>
    <property type="project" value="UniProtKB"/>
</dbReference>
<dbReference type="GO" id="GO:0005525">
    <property type="term" value="F:GTP binding"/>
    <property type="evidence" value="ECO:0000318"/>
    <property type="project" value="GO_Central"/>
</dbReference>
<dbReference type="GO" id="GO:0003924">
    <property type="term" value="F:GTPase activity"/>
    <property type="evidence" value="ECO:0007669"/>
    <property type="project" value="InterPro"/>
</dbReference>
<dbReference type="GO" id="GO:0006886">
    <property type="term" value="P:intracellular protein transport"/>
    <property type="evidence" value="ECO:0000318"/>
    <property type="project" value="GO_Central"/>
</dbReference>
<dbReference type="GO" id="GO:0016192">
    <property type="term" value="P:vesicle-mediated transport"/>
    <property type="evidence" value="ECO:0000318"/>
    <property type="project" value="GO_Central"/>
</dbReference>
<dbReference type="FunFam" id="3.40.50.300:FF:000458">
    <property type="entry name" value="ADP-ribosylation factor-like protein 4C"/>
    <property type="match status" value="1"/>
</dbReference>
<dbReference type="Gene3D" id="3.40.50.300">
    <property type="entry name" value="P-loop containing nucleotide triphosphate hydrolases"/>
    <property type="match status" value="1"/>
</dbReference>
<dbReference type="InterPro" id="IPR027417">
    <property type="entry name" value="P-loop_NTPase"/>
</dbReference>
<dbReference type="InterPro" id="IPR005225">
    <property type="entry name" value="Small_GTP-bd"/>
</dbReference>
<dbReference type="InterPro" id="IPR024156">
    <property type="entry name" value="Small_GTPase_ARF"/>
</dbReference>
<dbReference type="InterPro" id="IPR006689">
    <property type="entry name" value="Small_GTPase_ARF/SAR"/>
</dbReference>
<dbReference type="NCBIfam" id="TIGR00231">
    <property type="entry name" value="small_GTP"/>
    <property type="match status" value="1"/>
</dbReference>
<dbReference type="PANTHER" id="PTHR11711">
    <property type="entry name" value="ADP RIBOSYLATION FACTOR-RELATED"/>
    <property type="match status" value="1"/>
</dbReference>
<dbReference type="Pfam" id="PF00025">
    <property type="entry name" value="Arf"/>
    <property type="match status" value="1"/>
</dbReference>
<dbReference type="PRINTS" id="PR00328">
    <property type="entry name" value="SAR1GTPBP"/>
</dbReference>
<dbReference type="SMART" id="SM00177">
    <property type="entry name" value="ARF"/>
    <property type="match status" value="1"/>
</dbReference>
<dbReference type="SMART" id="SM00175">
    <property type="entry name" value="RAB"/>
    <property type="match status" value="1"/>
</dbReference>
<dbReference type="SMART" id="SM00178">
    <property type="entry name" value="SAR"/>
    <property type="match status" value="1"/>
</dbReference>
<dbReference type="SUPFAM" id="SSF52540">
    <property type="entry name" value="P-loop containing nucleoside triphosphate hydrolases"/>
    <property type="match status" value="1"/>
</dbReference>
<dbReference type="PROSITE" id="PS51417">
    <property type="entry name" value="ARF"/>
    <property type="match status" value="1"/>
</dbReference>
<reference key="1">
    <citation type="submission" date="2006-08" db="EMBL/GenBank/DDBJ databases">
        <authorList>
            <consortium name="NIH - Mammalian Gene Collection (MGC) project"/>
        </authorList>
    </citation>
    <scope>NUCLEOTIDE SEQUENCE [LARGE SCALE MRNA]</scope>
    <source>
        <strain>Hereford</strain>
        <tissue>Basal ganglia</tissue>
    </source>
</reference>
<name>ARL4D_BOVIN</name>
<accession>Q0VC18</accession>
<comment type="function">
    <text evidence="1">Small GTP-binding protein which cycles between an inactive GDP-bound and an active GTP-bound form, and the rate of cycling is regulated by guanine nucleotide exchange factors (GEF) and GTPase-activating proteins (GAP). GTP-binding protein that does not act as an allosteric activator of the cholera toxin catalytic subunit. Recruits CYTH1, CYTH2, CYTH3 and CYTH4 to the plasma membrane in GDP-bound form (By similarity).</text>
</comment>
<comment type="subunit">
    <text evidence="1">Interacts with CYTH2; the interaction is direct and ARL4D GTP-dependent. Does not interact with ARL4D (By similarity).</text>
</comment>
<comment type="subcellular location">
    <subcellularLocation>
        <location evidence="1">Nucleus</location>
        <location evidence="1">Nucleolus</location>
    </subcellularLocation>
    <subcellularLocation>
        <location>Cell membrane</location>
    </subcellularLocation>
    <subcellularLocation>
        <location evidence="1">Nucleus</location>
    </subcellularLocation>
    <subcellularLocation>
        <location evidence="1">Cytoplasm</location>
    </subcellularLocation>
</comment>
<comment type="similarity">
    <text evidence="3">Belongs to the small GTPase superfamily. Arf family.</text>
</comment>
<evidence type="ECO:0000250" key="1"/>
<evidence type="ECO:0000255" key="2"/>
<evidence type="ECO:0000305" key="3"/>
<feature type="initiator methionine" description="Removed" evidence="2">
    <location>
        <position position="1"/>
    </location>
</feature>
<feature type="chain" id="PRO_0000282339" description="ADP-ribosylation factor-like protein 4D">
    <location>
        <begin position="2"/>
        <end position="200"/>
    </location>
</feature>
<feature type="binding site" evidence="1">
    <location>
        <begin position="27"/>
        <end position="34"/>
    </location>
    <ligand>
        <name>GTP</name>
        <dbReference type="ChEBI" id="CHEBI:37565"/>
    </ligand>
</feature>
<feature type="binding site" evidence="1">
    <location>
        <begin position="75"/>
        <end position="79"/>
    </location>
    <ligand>
        <name>GTP</name>
        <dbReference type="ChEBI" id="CHEBI:37565"/>
    </ligand>
</feature>
<feature type="binding site" evidence="1">
    <location>
        <begin position="134"/>
        <end position="137"/>
    </location>
    <ligand>
        <name>GTP</name>
        <dbReference type="ChEBI" id="CHEBI:37565"/>
    </ligand>
</feature>
<feature type="lipid moiety-binding region" description="N-myristoyl glycine" evidence="2">
    <location>
        <position position="2"/>
    </location>
</feature>
<protein>
    <recommendedName>
        <fullName>ADP-ribosylation factor-like protein 4D</fullName>
    </recommendedName>
</protein>
<keyword id="KW-1003">Cell membrane</keyword>
<keyword id="KW-0963">Cytoplasm</keyword>
<keyword id="KW-0342">GTP-binding</keyword>
<keyword id="KW-0449">Lipoprotein</keyword>
<keyword id="KW-0472">Membrane</keyword>
<keyword id="KW-0519">Myristate</keyword>
<keyword id="KW-0547">Nucleotide-binding</keyword>
<keyword id="KW-0539">Nucleus</keyword>
<keyword id="KW-1185">Reference proteome</keyword>
<sequence>MGNHLTEMAPTTSFLPHFQALHVVVIGLDSAGKTSLLYRLKFKEFVQSIPTKGFNTEKIRVPLGGSRGITFQVWDVGGQEKLRPLWRSYTRRTDGLVFVVDAAEAERLEEAKVELHRISRASDNQGVPVLVLANKQDQPGALSAAEVEKRLAVRELATATLTHVQGCSAVDGLGLQPGLERLYEMILKRKKAARAGKKRR</sequence>
<proteinExistence type="evidence at transcript level"/>